<accession>Q10751</accession>
<accession>F1NYM0</accession>
<accession>J7GZN9</accession>
<sequence length="1281" mass="147239">MPAALGLLLPWLSLVGALQPGLEPPQSDPTEAGAVFFASEYNSTAEIVLFRSVSASWEYNTNLTTANAALQVEASLEEQNFTELWGKKAKELYGNIWSNFSDPQLKKIIGSIQTLGPSNLPLDKRQQYNTILSDMDKIYSTAKVCLDNGTCWDLEPDISDIMATSRSYKKLLYAWEGWHNAAGNPLRAKYQEFVTLSNEAYQMDGFEDTGSYWRSWYDSTTFEDDLEHLYNQLEPLYLNLHAFVRRKLYDRYGPKYINLKGPIPAHLLGNMWAQQWNNIYDLMVPYPDKPNLDVTNTMVNQGWNATHMFRVSEEFFTSLGLLEMPPEFWEKSMLEKPADGREVVCHASAWDFYNRKDFRIKQCTTVTMEQLFTVHHEMGHVQYYLQYKDQPVSFRGGANPGFHEAIGDVLSLSVSTPSHLQKIGLLSSAVEDEESNINYLLKMALEKIAFLPFGYLIDQWRWNVFSGRTPPSRYNYDWWYLRTKYQGICAPVSRNESNFDPGAKYHIPGNTPYIRYFVSFILQFQFHKALCQAANHTGPLHTCDIYMSKEAGAKLREVLKAGSSKSWQEILFNLTGTDKMDAGALLEYFSPVTTWLQEQNNKTNEVLGWPEFDWRPPIPEGYPEGIDKIVDEAQAKEFLSEYNSTAEVVWNAYTEASWEYNTNITDHNKEVMLEKNLAMSKHTIEYGMRARQFDPSDFQDETVTRILNKLSVLERAALPEDELKEYNTLLSDMETTYSVAKVCRENNTCHPLDPDLTDILATSRDYNELLFAWKGWRDASGAKIKDKYKRYVELSNKAAVLNGYTDNGAYWRSLYETPTFEEDLERLYLQLQPLYLNLHAYVRRALYNKYGAEHISLKGPIPAHLLGNMWAQSWSNIFDLVMPFPDATKVDATPAMKQQGWTPKMMFEESDRFFTSLGLIPMPQEFWDKSMIEKPADGREVVCHASAWDFYNRKDFRIKQCTVVNMDDLITVHHEMGHVQYFLQYMDQPISFRDGANPGFHEAIGDVMALSVSTPKHLHSINLLDQVTENEESDINYLMSIALDKIAFLPFGYLMDQWRWKVFDGRIKEDEYNQQWWNLRLKYQGLCPPVPRSEDDFDPGAKFHIPANVPYIRYFVSFVIQFQFHQALCKAAGHTGPLHTCDIYQSKEAGKLLGDAMKLGFSKPWPEAMQLITGQPNMSAEALMSYFEPLMTWLVKKNTENGEVLGWPEYSWTPYAVTEFHAATDTADFLGMSVGTKQATAGAWVLLALALVFLITSIFLGVKLFSSRRKAFKSSSEMELK</sequence>
<gene>
    <name evidence="6" type="primary">ACE</name>
    <name type="synonym">DCP1</name>
</gene>
<comment type="function">
    <text evidence="2">Dipeptidyl carboxypeptidase that removes dipeptides from the C-terminus of a variety of circulating hormones, such as angiotensin I, bradykinin or enkephalins, thereby playing a key role in the regulation of blood pressure, electrolyte homeostasis or synaptic plasticity (By similarity). Composed of two similar catalytic domains, each possessing a functional active site, with different selectivity for substrates (By similarity). Plays a major role in the angiotensin-renin system that regulates blood pressure and sodium retention by the kidney by converting angiotensin I to angiotensin II, resulting in an increase of the vasoconstrictor activity of angiotensin (By similarity). Also able to inactivate bradykinin, a potent vasodilator, and therefore enhance the blood pressure response (By similarity). Acts as a regulator of synaptic transmission by mediating cleavage of neuropeptide hormones, such as substance P, neurotensin or enkephalins (By similarity). Catalyzes degradation of different enkephalin neuropeptides (Met-enkephalin, Leu-enkephalin, Met-enkephalin-Arg-Phe and possibly Met-enkephalin-Arg-Gly-Leu) (By similarity). Also acts as a regulator of hematopoietic stem cell differentiation by mediating degradation of hemoregulatory peptide N-acetyl-SDKP (AcSDKP) (By similarity).</text>
</comment>
<comment type="catalytic activity">
    <reaction evidence="2">
        <text>Release of a C-terminal dipeptide, oligopeptide-|-Xaa-Yaa, when Xaa is not Pro, and Yaa is neither Asp nor Glu. Thus, conversion of angiotensin I to angiotensin II, with increase in vasoconstrictor activity, but no action on angiotensin II.</text>
        <dbReference type="EC" id="3.4.15.1"/>
    </reaction>
</comment>
<comment type="catalytic activity">
    <reaction evidence="2">
        <text>angiotensin I + H2O = L-histidyl-L-leucine + angiotensin II</text>
        <dbReference type="Rhea" id="RHEA:63560"/>
        <dbReference type="ChEBI" id="CHEBI:15377"/>
        <dbReference type="ChEBI" id="CHEBI:58506"/>
        <dbReference type="ChEBI" id="CHEBI:147350"/>
        <dbReference type="ChEBI" id="CHEBI:147392"/>
        <dbReference type="EC" id="3.4.15.1"/>
    </reaction>
    <physiologicalReaction direction="left-to-right" evidence="2">
        <dbReference type="Rhea" id="RHEA:63561"/>
    </physiologicalReaction>
</comment>
<comment type="catalytic activity">
    <reaction evidence="2">
        <text>bradykinin + H2O = L-Phe-L-Arg + bradykinin(1-7)</text>
        <dbReference type="Rhea" id="RHEA:71451"/>
        <dbReference type="ChEBI" id="CHEBI:15377"/>
        <dbReference type="ChEBI" id="CHEBI:132988"/>
        <dbReference type="ChEBI" id="CHEBI:133147"/>
        <dbReference type="ChEBI" id="CHEBI:147352"/>
    </reaction>
    <physiologicalReaction direction="left-to-right" evidence="2">
        <dbReference type="Rhea" id="RHEA:71452"/>
    </physiologicalReaction>
</comment>
<comment type="catalytic activity">
    <reaction evidence="2">
        <text>substance P + H2O = substance P(1-9) + L-Leu-L-Met-NH2</text>
        <dbReference type="Rhea" id="RHEA:71459"/>
        <dbReference type="ChEBI" id="CHEBI:15377"/>
        <dbReference type="ChEBI" id="CHEBI:190692"/>
        <dbReference type="ChEBI" id="CHEBI:190693"/>
        <dbReference type="ChEBI" id="CHEBI:190700"/>
    </reaction>
    <physiologicalReaction direction="left-to-right" evidence="2">
        <dbReference type="Rhea" id="RHEA:71460"/>
    </physiologicalReaction>
</comment>
<comment type="catalytic activity">
    <reaction evidence="2">
        <text>substance P + H2O = substance P(1-8) + Gly-L-Leu-L-Met-NH2</text>
        <dbReference type="Rhea" id="RHEA:71463"/>
        <dbReference type="ChEBI" id="CHEBI:15377"/>
        <dbReference type="ChEBI" id="CHEBI:190692"/>
        <dbReference type="ChEBI" id="CHEBI:190694"/>
        <dbReference type="ChEBI" id="CHEBI:190699"/>
    </reaction>
    <physiologicalReaction direction="left-to-right" evidence="2">
        <dbReference type="Rhea" id="RHEA:71464"/>
    </physiologicalReaction>
</comment>
<comment type="catalytic activity">
    <reaction evidence="2">
        <text>substance P + H2O = L-Phe-L-Phe-Gly-L-Leu-L-Met-NH2 + substance P(1-6)</text>
        <dbReference type="Rhea" id="RHEA:71471"/>
        <dbReference type="ChEBI" id="CHEBI:15377"/>
        <dbReference type="ChEBI" id="CHEBI:190692"/>
        <dbReference type="ChEBI" id="CHEBI:190696"/>
        <dbReference type="ChEBI" id="CHEBI:190697"/>
    </reaction>
    <physiologicalReaction direction="left-to-right" evidence="2">
        <dbReference type="Rhea" id="RHEA:71472"/>
    </physiologicalReaction>
</comment>
<comment type="catalytic activity">
    <reaction evidence="2">
        <text>neurotensin + H2O = neurotensin(1-11) + L-isoleucyl-L-leucine</text>
        <dbReference type="Rhea" id="RHEA:71475"/>
        <dbReference type="ChEBI" id="CHEBI:15377"/>
        <dbReference type="ChEBI" id="CHEBI:147362"/>
        <dbReference type="ChEBI" id="CHEBI:190704"/>
        <dbReference type="ChEBI" id="CHEBI:190706"/>
    </reaction>
    <physiologicalReaction direction="left-to-right" evidence="2">
        <dbReference type="Rhea" id="RHEA:71476"/>
    </physiologicalReaction>
</comment>
<comment type="catalytic activity">
    <reaction evidence="2">
        <text>goralatide + H2O = N-acetyl-L-seryl-L-aspartate + L-lysyl-L-proline</text>
        <dbReference type="Rhea" id="RHEA:71455"/>
        <dbReference type="ChEBI" id="CHEBI:15377"/>
        <dbReference type="ChEBI" id="CHEBI:190701"/>
        <dbReference type="ChEBI" id="CHEBI:190702"/>
        <dbReference type="ChEBI" id="CHEBI:190703"/>
    </reaction>
    <physiologicalReaction direction="left-to-right" evidence="2">
        <dbReference type="Rhea" id="RHEA:71456"/>
    </physiologicalReaction>
</comment>
<comment type="catalytic activity">
    <reaction evidence="2">
        <text>Met-enkephalin + H2O = L-phenylalanyl-L-methionine + L-tyrosylglycylglycine</text>
        <dbReference type="Rhea" id="RHEA:71483"/>
        <dbReference type="ChEBI" id="CHEBI:15377"/>
        <dbReference type="ChEBI" id="CHEBI:189868"/>
        <dbReference type="ChEBI" id="CHEBI:190708"/>
        <dbReference type="ChEBI" id="CHEBI:190709"/>
    </reaction>
    <physiologicalReaction direction="left-to-right" evidence="2">
        <dbReference type="Rhea" id="RHEA:71484"/>
    </physiologicalReaction>
</comment>
<comment type="catalytic activity">
    <reaction evidence="2">
        <text>Leu-enkephalin + H2O = L-tyrosylglycylglycine + L-phenylalanyl-L-leucine</text>
        <dbReference type="Rhea" id="RHEA:71487"/>
        <dbReference type="ChEBI" id="CHEBI:15377"/>
        <dbReference type="ChEBI" id="CHEBI:190689"/>
        <dbReference type="ChEBI" id="CHEBI:190708"/>
        <dbReference type="ChEBI" id="CHEBI:190710"/>
    </reaction>
    <physiologicalReaction direction="left-to-right" evidence="2">
        <dbReference type="Rhea" id="RHEA:71488"/>
    </physiologicalReaction>
</comment>
<comment type="catalytic activity">
    <reaction evidence="1">
        <text>Met-enkephalin-Arg-Phe + H2O = L-arginyl-L-phenylalanine + Met-enkephalin</text>
        <dbReference type="Rhea" id="RHEA:70675"/>
        <dbReference type="ChEBI" id="CHEBI:15377"/>
        <dbReference type="ChEBI" id="CHEBI:189868"/>
        <dbReference type="ChEBI" id="CHEBI:189869"/>
        <dbReference type="ChEBI" id="CHEBI:189870"/>
    </reaction>
    <physiologicalReaction direction="left-to-right" evidence="1">
        <dbReference type="Rhea" id="RHEA:70676"/>
    </physiologicalReaction>
</comment>
<comment type="cofactor">
    <cofactor evidence="2">
        <name>Zn(2+)</name>
        <dbReference type="ChEBI" id="CHEBI:29105"/>
    </cofactor>
    <text evidence="2">Binds 2 Zn(2+) ions per subunit.</text>
</comment>
<comment type="cofactor">
    <cofactor evidence="2">
        <name>chloride</name>
        <dbReference type="ChEBI" id="CHEBI:17996"/>
    </cofactor>
    <text evidence="2">Binds 3 chloride ions per subunit.</text>
</comment>
<comment type="subcellular location">
    <subcellularLocation>
        <location evidence="2">Cell membrane</location>
        <topology evidence="3">Single-pass type I membrane protein</topology>
    </subcellularLocation>
    <subcellularLocation>
        <location evidence="1">Cytoplasm</location>
    </subcellularLocation>
    <text evidence="1">Detected in both cell membrane and cytoplasm in neurons.</text>
</comment>
<comment type="similarity">
    <text evidence="7">Belongs to the peptidase M2 family.</text>
</comment>
<organism>
    <name type="scientific">Gallus gallus</name>
    <name type="common">Chicken</name>
    <dbReference type="NCBI Taxonomy" id="9031"/>
    <lineage>
        <taxon>Eukaryota</taxon>
        <taxon>Metazoa</taxon>
        <taxon>Chordata</taxon>
        <taxon>Craniata</taxon>
        <taxon>Vertebrata</taxon>
        <taxon>Euteleostomi</taxon>
        <taxon>Archelosauria</taxon>
        <taxon>Archosauria</taxon>
        <taxon>Dinosauria</taxon>
        <taxon>Saurischia</taxon>
        <taxon>Theropoda</taxon>
        <taxon>Coelurosauria</taxon>
        <taxon>Aves</taxon>
        <taxon>Neognathae</taxon>
        <taxon>Galloanserae</taxon>
        <taxon>Galliformes</taxon>
        <taxon>Phasianidae</taxon>
        <taxon>Phasianinae</taxon>
        <taxon>Gallus</taxon>
    </lineage>
</organism>
<reference key="1">
    <citation type="journal article" date="1994" name="Biochem. Biophys. Res. Commun.">
        <title>Chicken lacks the testis specific isozyme of angiotensin converting enzyme found in mammals.</title>
        <authorList>
            <person name="Esther C.R."/>
            <person name="Thomas K.E."/>
            <person name="Bernstein K.E."/>
        </authorList>
    </citation>
    <scope>NUCLEOTIDE SEQUENCE [MRNA]</scope>
    <source>
        <tissue>Lung</tissue>
    </source>
</reference>
<reference evidence="8" key="2">
    <citation type="submission" date="2012-06" db="EMBL/GenBank/DDBJ databases">
        <authorList>
            <person name="Peng J."/>
            <person name="Zhang H."/>
        </authorList>
    </citation>
    <scope>NUCLEOTIDE SEQUENCE [MRNA]</scope>
</reference>
<reference key="3">
    <citation type="journal article" date="2004" name="Nature">
        <title>Sequence and comparative analysis of the chicken genome provide unique perspectives on vertebrate evolution.</title>
        <authorList>
            <person name="Hillier L.W."/>
            <person name="Miller W."/>
            <person name="Birney E."/>
            <person name="Warren W."/>
            <person name="Hardison R.C."/>
            <person name="Ponting C.P."/>
            <person name="Bork P."/>
            <person name="Burt D.W."/>
            <person name="Groenen M.A.M."/>
            <person name="Delany M.E."/>
            <person name="Dodgson J.B."/>
            <person name="Chinwalla A.T."/>
            <person name="Cliften P.F."/>
            <person name="Clifton S.W."/>
            <person name="Delehaunty K.D."/>
            <person name="Fronick C."/>
            <person name="Fulton R.S."/>
            <person name="Graves T.A."/>
            <person name="Kremitzki C."/>
            <person name="Layman D."/>
            <person name="Magrini V."/>
            <person name="McPherson J.D."/>
            <person name="Miner T.L."/>
            <person name="Minx P."/>
            <person name="Nash W.E."/>
            <person name="Nhan M.N."/>
            <person name="Nelson J.O."/>
            <person name="Oddy L.G."/>
            <person name="Pohl C.S."/>
            <person name="Randall-Maher J."/>
            <person name="Smith S.M."/>
            <person name="Wallis J.W."/>
            <person name="Yang S.-P."/>
            <person name="Romanov M.N."/>
            <person name="Rondelli C.M."/>
            <person name="Paton B."/>
            <person name="Smith J."/>
            <person name="Morrice D."/>
            <person name="Daniels L."/>
            <person name="Tempest H.G."/>
            <person name="Robertson L."/>
            <person name="Masabanda J.S."/>
            <person name="Griffin D.K."/>
            <person name="Vignal A."/>
            <person name="Fillon V."/>
            <person name="Jacobbson L."/>
            <person name="Kerje S."/>
            <person name="Andersson L."/>
            <person name="Crooijmans R.P."/>
            <person name="Aerts J."/>
            <person name="van der Poel J.J."/>
            <person name="Ellegren H."/>
            <person name="Caldwell R.B."/>
            <person name="Hubbard S.J."/>
            <person name="Grafham D.V."/>
            <person name="Kierzek A.M."/>
            <person name="McLaren S.R."/>
            <person name="Overton I.M."/>
            <person name="Arakawa H."/>
            <person name="Beattie K.J."/>
            <person name="Bezzubov Y."/>
            <person name="Boardman P.E."/>
            <person name="Bonfield J.K."/>
            <person name="Croning M.D.R."/>
            <person name="Davies R.M."/>
            <person name="Francis M.D."/>
            <person name="Humphray S.J."/>
            <person name="Scott C.E."/>
            <person name="Taylor R.G."/>
            <person name="Tickle C."/>
            <person name="Brown W.R.A."/>
            <person name="Rogers J."/>
            <person name="Buerstedde J.-M."/>
            <person name="Wilson S.A."/>
            <person name="Stubbs L."/>
            <person name="Ovcharenko I."/>
            <person name="Gordon L."/>
            <person name="Lucas S."/>
            <person name="Miller M.M."/>
            <person name="Inoko H."/>
            <person name="Shiina T."/>
            <person name="Kaufman J."/>
            <person name="Salomonsen J."/>
            <person name="Skjoedt K."/>
            <person name="Wong G.K.-S."/>
            <person name="Wang J."/>
            <person name="Liu B."/>
            <person name="Wang J."/>
            <person name="Yu J."/>
            <person name="Yang H."/>
            <person name="Nefedov M."/>
            <person name="Koriabine M."/>
            <person name="Dejong P.J."/>
            <person name="Goodstadt L."/>
            <person name="Webber C."/>
            <person name="Dickens N.J."/>
            <person name="Letunic I."/>
            <person name="Suyama M."/>
            <person name="Torrents D."/>
            <person name="von Mering C."/>
            <person name="Zdobnov E.M."/>
            <person name="Makova K."/>
            <person name="Nekrutenko A."/>
            <person name="Elnitski L."/>
            <person name="Eswara P."/>
            <person name="King D.C."/>
            <person name="Yang S.-P."/>
            <person name="Tyekucheva S."/>
            <person name="Radakrishnan A."/>
            <person name="Harris R.S."/>
            <person name="Chiaromonte F."/>
            <person name="Taylor J."/>
            <person name="He J."/>
            <person name="Rijnkels M."/>
            <person name="Griffiths-Jones S."/>
            <person name="Ureta-Vidal A."/>
            <person name="Hoffman M.M."/>
            <person name="Severin J."/>
            <person name="Searle S.M.J."/>
            <person name="Law A.S."/>
            <person name="Speed D."/>
            <person name="Waddington D."/>
            <person name="Cheng Z."/>
            <person name="Tuzun E."/>
            <person name="Eichler E."/>
            <person name="Bao Z."/>
            <person name="Flicek P."/>
            <person name="Shteynberg D.D."/>
            <person name="Brent M.R."/>
            <person name="Bye J.M."/>
            <person name="Huckle E.J."/>
            <person name="Chatterji S."/>
            <person name="Dewey C."/>
            <person name="Pachter L."/>
            <person name="Kouranov A."/>
            <person name="Mourelatos Z."/>
            <person name="Hatzigeorgiou A.G."/>
            <person name="Paterson A.H."/>
            <person name="Ivarie R."/>
            <person name="Brandstrom M."/>
            <person name="Axelsson E."/>
            <person name="Backstrom N."/>
            <person name="Berlin S."/>
            <person name="Webster M.T."/>
            <person name="Pourquie O."/>
            <person name="Reymond A."/>
            <person name="Ucla C."/>
            <person name="Antonarakis S.E."/>
            <person name="Long M."/>
            <person name="Emerson J.J."/>
            <person name="Betran E."/>
            <person name="Dupanloup I."/>
            <person name="Kaessmann H."/>
            <person name="Hinrichs A.S."/>
            <person name="Bejerano G."/>
            <person name="Furey T.S."/>
            <person name="Harte R.A."/>
            <person name="Raney B."/>
            <person name="Siepel A."/>
            <person name="Kent W.J."/>
            <person name="Haussler D."/>
            <person name="Eyras E."/>
            <person name="Castelo R."/>
            <person name="Abril J.F."/>
            <person name="Castellano S."/>
            <person name="Camara F."/>
            <person name="Parra G."/>
            <person name="Guigo R."/>
            <person name="Bourque G."/>
            <person name="Tesler G."/>
            <person name="Pevzner P.A."/>
            <person name="Smit A."/>
            <person name="Fulton L.A."/>
            <person name="Mardis E.R."/>
            <person name="Wilson R.K."/>
        </authorList>
    </citation>
    <scope>NUCLEOTIDE SEQUENCE [LARGE SCALE GENOMIC DNA]</scope>
    <source>
        <strain>Red jungle fowl</strain>
    </source>
</reference>
<proteinExistence type="evidence at transcript level"/>
<feature type="signal peptide" evidence="3">
    <location>
        <begin position="1"/>
        <end position="17"/>
    </location>
</feature>
<feature type="chain" id="PRO_0000078152" description="Angiotensin-converting enzyme">
    <location>
        <begin position="18"/>
        <end position="1281"/>
    </location>
</feature>
<feature type="topological domain" description="Extracellular" evidence="3">
    <location>
        <begin position="18"/>
        <end position="1241"/>
    </location>
</feature>
<feature type="transmembrane region" description="Helical" evidence="3">
    <location>
        <begin position="1242"/>
        <end position="1262"/>
    </location>
</feature>
<feature type="topological domain" description="Cytoplasmic" evidence="3">
    <location>
        <begin position="1263"/>
        <end position="1281"/>
    </location>
</feature>
<feature type="domain" description="Peptidase M2 1" evidence="5">
    <location>
        <begin position="28"/>
        <end position="610"/>
    </location>
</feature>
<feature type="domain" description="Peptidase M2 2" evidence="5">
    <location>
        <begin position="629"/>
        <end position="1208"/>
    </location>
</feature>
<feature type="region of interest" description="Juxtamembrane stalk" evidence="2">
    <location>
        <begin position="1201"/>
        <end position="1240"/>
    </location>
</feature>
<feature type="active site" description="Proton acceptor 1" evidence="5">
    <location>
        <position position="377"/>
    </location>
</feature>
<feature type="active site" description="Proton donor 1" evidence="5">
    <location>
        <position position="506"/>
    </location>
</feature>
<feature type="active site" description="Proton acceptor 2" evidence="5">
    <location>
        <position position="975"/>
    </location>
</feature>
<feature type="active site" description="Proton donor 2" evidence="5">
    <location>
        <position position="1104"/>
    </location>
</feature>
<feature type="binding site" evidence="5">
    <location>
        <position position="217"/>
    </location>
    <ligand>
        <name>chloride</name>
        <dbReference type="ChEBI" id="CHEBI:17996"/>
        <label>1</label>
    </ligand>
</feature>
<feature type="binding site" evidence="5">
    <location>
        <position position="376"/>
    </location>
    <ligand>
        <name>Zn(2+)</name>
        <dbReference type="ChEBI" id="CHEBI:29105"/>
        <label>1</label>
        <note>catalytic</note>
    </ligand>
</feature>
<feature type="binding site" evidence="5">
    <location>
        <position position="380"/>
    </location>
    <ligand>
        <name>Zn(2+)</name>
        <dbReference type="ChEBI" id="CHEBI:29105"/>
        <label>1</label>
        <note>catalytic</note>
    </ligand>
</feature>
<feature type="binding site" evidence="5">
    <location>
        <position position="404"/>
    </location>
    <ligand>
        <name>Zn(2+)</name>
        <dbReference type="ChEBI" id="CHEBI:29105"/>
        <label>1</label>
        <note>catalytic</note>
    </ligand>
</feature>
<feature type="binding site" evidence="5">
    <location>
        <position position="515"/>
    </location>
    <ligand>
        <name>chloride</name>
        <dbReference type="ChEBI" id="CHEBI:17996"/>
        <label>1</label>
    </ligand>
</feature>
<feature type="binding site" evidence="5">
    <location>
        <position position="777"/>
    </location>
    <ligand>
        <name>chloride</name>
        <dbReference type="ChEBI" id="CHEBI:17996"/>
        <label>2</label>
    </ligand>
</feature>
<feature type="binding site" evidence="5">
    <location>
        <position position="815"/>
    </location>
    <ligand>
        <name>chloride</name>
        <dbReference type="ChEBI" id="CHEBI:17996"/>
        <label>3</label>
    </ligand>
</feature>
<feature type="binding site" evidence="5">
    <location>
        <position position="974"/>
    </location>
    <ligand>
        <name>Zn(2+)</name>
        <dbReference type="ChEBI" id="CHEBI:29105"/>
        <label>2</label>
        <note>catalytic</note>
    </ligand>
</feature>
<feature type="binding site" evidence="5">
    <location>
        <position position="978"/>
    </location>
    <ligand>
        <name>Zn(2+)</name>
        <dbReference type="ChEBI" id="CHEBI:29105"/>
        <label>2</label>
        <note>catalytic</note>
    </ligand>
</feature>
<feature type="binding site" evidence="5">
    <location>
        <position position="1002"/>
    </location>
    <ligand>
        <name>Zn(2+)</name>
        <dbReference type="ChEBI" id="CHEBI:29105"/>
        <label>2</label>
        <note>catalytic</note>
    </ligand>
</feature>
<feature type="binding site" evidence="5">
    <location>
        <position position="1076"/>
    </location>
    <ligand>
        <name>chloride</name>
        <dbReference type="ChEBI" id="CHEBI:17996"/>
        <label>2</label>
    </ligand>
</feature>
<feature type="binding site" evidence="5">
    <location>
        <position position="1080"/>
    </location>
    <ligand>
        <name>chloride</name>
        <dbReference type="ChEBI" id="CHEBI:17996"/>
        <label>2</label>
    </ligand>
</feature>
<feature type="binding site" evidence="5">
    <location>
        <position position="1113"/>
    </location>
    <ligand>
        <name>chloride</name>
        <dbReference type="ChEBI" id="CHEBI:17996"/>
        <label>3</label>
    </ligand>
</feature>
<feature type="site" description="Cleavage" evidence="2">
    <location>
        <begin position="1152"/>
        <end position="1153"/>
    </location>
</feature>
<feature type="site" description="Cleavage" evidence="2">
    <location>
        <begin position="1218"/>
        <end position="1219"/>
    </location>
</feature>
<feature type="glycosylation site" description="N-linked (GlcNAc...) asparagine" evidence="4">
    <location>
        <position position="42"/>
    </location>
</feature>
<feature type="glycosylation site" description="N-linked (GlcNAc...) asparagine" evidence="4">
    <location>
        <position position="62"/>
    </location>
</feature>
<feature type="glycosylation site" description="N-linked (GlcNAc...) asparagine" evidence="4">
    <location>
        <position position="80"/>
    </location>
</feature>
<feature type="glycosylation site" description="N-linked (GlcNAc...) asparagine" evidence="4">
    <location>
        <position position="99"/>
    </location>
</feature>
<feature type="glycosylation site" description="N-linked (GlcNAc...) asparagine" evidence="4">
    <location>
        <position position="148"/>
    </location>
</feature>
<feature type="glycosylation site" description="N-linked (GlcNAc...) asparagine" evidence="4">
    <location>
        <position position="304"/>
    </location>
</feature>
<feature type="glycosylation site" description="N-linked (GlcNAc...) asparagine" evidence="4">
    <location>
        <position position="495"/>
    </location>
</feature>
<feature type="glycosylation site" description="N-linked (GlcNAc...) asparagine" evidence="4">
    <location>
        <position position="535"/>
    </location>
</feature>
<feature type="glycosylation site" description="N-linked (GlcNAc...) asparagine" evidence="4">
    <location>
        <position position="573"/>
    </location>
</feature>
<feature type="glycosylation site" description="N-linked (GlcNAc...) asparagine" evidence="4">
    <location>
        <position position="601"/>
    </location>
</feature>
<feature type="glycosylation site" description="N-linked (GlcNAc...) asparagine" evidence="4">
    <location>
        <position position="643"/>
    </location>
</feature>
<feature type="glycosylation site" description="N-linked (GlcNAc...) asparagine" evidence="4">
    <location>
        <position position="663"/>
    </location>
</feature>
<feature type="glycosylation site" description="N-linked (GlcNAc...) asparagine" evidence="4">
    <location>
        <position position="746"/>
    </location>
</feature>
<feature type="glycosylation site" description="N-linked (GlcNAc...) asparagine" evidence="4">
    <location>
        <position position="1177"/>
    </location>
</feature>
<feature type="disulfide bond" evidence="5">
    <location>
        <begin position="145"/>
        <end position="151"/>
    </location>
</feature>
<feature type="disulfide bond" evidence="5">
    <location>
        <begin position="345"/>
        <end position="363"/>
    </location>
</feature>
<feature type="disulfide bond" evidence="5">
    <location>
        <begin position="531"/>
        <end position="543"/>
    </location>
</feature>
<feature type="disulfide bond" evidence="5">
    <location>
        <begin position="743"/>
        <end position="749"/>
    </location>
</feature>
<feature type="disulfide bond" evidence="5">
    <location>
        <begin position="943"/>
        <end position="961"/>
    </location>
</feature>
<feature type="disulfide bond" evidence="5">
    <location>
        <begin position="1129"/>
        <end position="1141"/>
    </location>
</feature>
<feature type="sequence conflict" description="In Ref. 1; AAA75554." ref="1">
    <original>P</original>
    <variation>S</variation>
    <location>
        <position position="616"/>
    </location>
</feature>
<feature type="sequence conflict" description="In Ref. 1; AAA75554." ref="1">
    <original>C</original>
    <variation>F</variation>
    <location>
        <position position="749"/>
    </location>
</feature>
<feature type="sequence conflict" description="In Ref. 1; AAA75554." ref="1">
    <original>R</original>
    <variation>W</variation>
    <location>
        <position position="777"/>
    </location>
</feature>
<dbReference type="EC" id="3.4.15.1" evidence="2"/>
<dbReference type="EMBL" id="L40175">
    <property type="protein sequence ID" value="AAA75554.1"/>
    <property type="molecule type" value="mRNA"/>
</dbReference>
<dbReference type="EMBL" id="JX218994">
    <property type="protein sequence ID" value="AFP83450.1"/>
    <property type="molecule type" value="mRNA"/>
</dbReference>
<dbReference type="EMBL" id="AADN05000732">
    <property type="status" value="NOT_ANNOTATED_CDS"/>
    <property type="molecule type" value="Genomic_DNA"/>
</dbReference>
<dbReference type="PIR" id="JC2489">
    <property type="entry name" value="JC2489"/>
</dbReference>
<dbReference type="RefSeq" id="NP_001161204.1">
    <property type="nucleotide sequence ID" value="NM_001167732.1"/>
</dbReference>
<dbReference type="SMR" id="Q10751"/>
<dbReference type="FunCoup" id="Q10751">
    <property type="interactions" value="3"/>
</dbReference>
<dbReference type="STRING" id="9031.ENSGALP00000039731"/>
<dbReference type="MEROPS" id="M02.001"/>
<dbReference type="MEROPS" id="M02.004"/>
<dbReference type="GlyCosmos" id="Q10751">
    <property type="glycosylation" value="14 sites, No reported glycans"/>
</dbReference>
<dbReference type="GlyGen" id="Q10751">
    <property type="glycosylation" value="15 sites"/>
</dbReference>
<dbReference type="PaxDb" id="9031-ENSGALP00000039731"/>
<dbReference type="GeneID" id="419953"/>
<dbReference type="KEGG" id="gga:419953"/>
<dbReference type="CTD" id="1636"/>
<dbReference type="VEuPathDB" id="HostDB:geneid_419953"/>
<dbReference type="eggNOG" id="KOG3690">
    <property type="taxonomic scope" value="Eukaryota"/>
</dbReference>
<dbReference type="HOGENOM" id="CLU_006219_0_0_1"/>
<dbReference type="InParanoid" id="Q10751"/>
<dbReference type="OrthoDB" id="10029630at2759"/>
<dbReference type="PhylomeDB" id="Q10751"/>
<dbReference type="TreeFam" id="TF312861"/>
<dbReference type="Reactome" id="R-GGA-2022377">
    <property type="pathway name" value="Metabolism of Angiotensinogen to Angiotensins"/>
</dbReference>
<dbReference type="PRO" id="PR:Q10751"/>
<dbReference type="Proteomes" id="UP000000539">
    <property type="component" value="Chromosome 27"/>
</dbReference>
<dbReference type="Bgee" id="ENSGALG00000000498">
    <property type="expression patterns" value="Expressed in lung and 7 other cell types or tissues"/>
</dbReference>
<dbReference type="GO" id="GO:0005737">
    <property type="term" value="C:cytoplasm"/>
    <property type="evidence" value="ECO:0007669"/>
    <property type="project" value="UniProtKB-SubCell"/>
</dbReference>
<dbReference type="GO" id="GO:0016020">
    <property type="term" value="C:membrane"/>
    <property type="evidence" value="ECO:0000314"/>
    <property type="project" value="AgBase"/>
</dbReference>
<dbReference type="GO" id="GO:0005886">
    <property type="term" value="C:plasma membrane"/>
    <property type="evidence" value="ECO:0000318"/>
    <property type="project" value="GO_Central"/>
</dbReference>
<dbReference type="GO" id="GO:0004180">
    <property type="term" value="F:carboxypeptidase activity"/>
    <property type="evidence" value="ECO:0007669"/>
    <property type="project" value="UniProtKB-KW"/>
</dbReference>
<dbReference type="GO" id="GO:0031404">
    <property type="term" value="F:chloride ion binding"/>
    <property type="evidence" value="ECO:0000250"/>
    <property type="project" value="UniProtKB"/>
</dbReference>
<dbReference type="GO" id="GO:0070573">
    <property type="term" value="F:metallodipeptidase activity"/>
    <property type="evidence" value="ECO:0000250"/>
    <property type="project" value="UniProtKB"/>
</dbReference>
<dbReference type="GO" id="GO:0004222">
    <property type="term" value="F:metalloendopeptidase activity"/>
    <property type="evidence" value="ECO:0000250"/>
    <property type="project" value="UniProtKB"/>
</dbReference>
<dbReference type="GO" id="GO:0008237">
    <property type="term" value="F:metallopeptidase activity"/>
    <property type="evidence" value="ECO:0000318"/>
    <property type="project" value="GO_Central"/>
</dbReference>
<dbReference type="GO" id="GO:0008241">
    <property type="term" value="F:peptidyl-dipeptidase activity"/>
    <property type="evidence" value="ECO:0000314"/>
    <property type="project" value="GO_Central"/>
</dbReference>
<dbReference type="GO" id="GO:0008270">
    <property type="term" value="F:zinc ion binding"/>
    <property type="evidence" value="ECO:0000247"/>
    <property type="project" value="AgBase"/>
</dbReference>
<dbReference type="GO" id="GO:0002003">
    <property type="term" value="P:angiotensin maturation"/>
    <property type="evidence" value="ECO:0000250"/>
    <property type="project" value="UniProtKB"/>
</dbReference>
<dbReference type="GO" id="GO:0010815">
    <property type="term" value="P:bradykinin catabolic process"/>
    <property type="evidence" value="ECO:0000250"/>
    <property type="project" value="UniProtKB"/>
</dbReference>
<dbReference type="GO" id="GO:0008283">
    <property type="term" value="P:cell population proliferation"/>
    <property type="evidence" value="ECO:0000315"/>
    <property type="project" value="AgBase"/>
</dbReference>
<dbReference type="GO" id="GO:0042447">
    <property type="term" value="P:hormone catabolic process"/>
    <property type="evidence" value="ECO:0000250"/>
    <property type="project" value="UniProtKB"/>
</dbReference>
<dbReference type="GO" id="GO:0042445">
    <property type="term" value="P:hormone metabolic process"/>
    <property type="evidence" value="ECO:0000250"/>
    <property type="project" value="UniProtKB"/>
</dbReference>
<dbReference type="GO" id="GO:0001822">
    <property type="term" value="P:kidney development"/>
    <property type="evidence" value="ECO:0000250"/>
    <property type="project" value="UniProtKB"/>
</dbReference>
<dbReference type="GO" id="GO:0003084">
    <property type="term" value="P:positive regulation of systemic arterial blood pressure"/>
    <property type="evidence" value="ECO:0000318"/>
    <property type="project" value="GO_Central"/>
</dbReference>
<dbReference type="GO" id="GO:0060319">
    <property type="term" value="P:primitive erythrocyte differentiation"/>
    <property type="evidence" value="ECO:0000315"/>
    <property type="project" value="AgBase"/>
</dbReference>
<dbReference type="GO" id="GO:0008217">
    <property type="term" value="P:regulation of blood pressure"/>
    <property type="evidence" value="ECO:0000250"/>
    <property type="project" value="UniProtKB"/>
</dbReference>
<dbReference type="GO" id="GO:0048167">
    <property type="term" value="P:regulation of synaptic plasticity"/>
    <property type="evidence" value="ECO:0000250"/>
    <property type="project" value="UniProtKB"/>
</dbReference>
<dbReference type="GO" id="GO:0003081">
    <property type="term" value="P:regulation of systemic arterial blood pressure by renin-angiotensin"/>
    <property type="evidence" value="ECO:0000318"/>
    <property type="project" value="GO_Central"/>
</dbReference>
<dbReference type="GO" id="GO:0010814">
    <property type="term" value="P:substance P catabolic process"/>
    <property type="evidence" value="ECO:0000250"/>
    <property type="project" value="UniProtKB"/>
</dbReference>
<dbReference type="CDD" id="cd06461">
    <property type="entry name" value="M2_ACE"/>
    <property type="match status" value="2"/>
</dbReference>
<dbReference type="FunFam" id="1.10.1370.30:FF:000004">
    <property type="entry name" value="Angiotensin-converting enzyme"/>
    <property type="match status" value="2"/>
</dbReference>
<dbReference type="Gene3D" id="1.10.1370.30">
    <property type="match status" value="1"/>
</dbReference>
<dbReference type="InterPro" id="IPR001548">
    <property type="entry name" value="Peptidase_M2"/>
</dbReference>
<dbReference type="PANTHER" id="PTHR10514">
    <property type="entry name" value="ANGIOTENSIN-CONVERTING ENZYME"/>
    <property type="match status" value="1"/>
</dbReference>
<dbReference type="PANTHER" id="PTHR10514:SF27">
    <property type="entry name" value="ANGIOTENSIN-CONVERTING ENZYME"/>
    <property type="match status" value="1"/>
</dbReference>
<dbReference type="Pfam" id="PF01401">
    <property type="entry name" value="Peptidase_M2"/>
    <property type="match status" value="2"/>
</dbReference>
<dbReference type="PRINTS" id="PR00791">
    <property type="entry name" value="PEPDIPTASEA"/>
</dbReference>
<dbReference type="SUPFAM" id="SSF55486">
    <property type="entry name" value="Metalloproteases ('zincins'), catalytic domain"/>
    <property type="match status" value="2"/>
</dbReference>
<dbReference type="PROSITE" id="PS52011">
    <property type="entry name" value="PEPTIDASE_M2"/>
    <property type="match status" value="2"/>
</dbReference>
<dbReference type="PROSITE" id="PS00142">
    <property type="entry name" value="ZINC_PROTEASE"/>
    <property type="match status" value="2"/>
</dbReference>
<protein>
    <recommendedName>
        <fullName evidence="6">Angiotensin-converting enzyme</fullName>
        <shortName evidence="6">ACE</shortName>
        <ecNumber evidence="2">3.4.15.1</ecNumber>
    </recommendedName>
    <alternativeName>
        <fullName>Dipeptidyl carboxypeptidase I</fullName>
    </alternativeName>
    <alternativeName>
        <fullName evidence="2">Kininase II</fullName>
    </alternativeName>
</protein>
<evidence type="ECO:0000250" key="1">
    <source>
        <dbReference type="UniProtKB" id="P09470"/>
    </source>
</evidence>
<evidence type="ECO:0000250" key="2">
    <source>
        <dbReference type="UniProtKB" id="P12821"/>
    </source>
</evidence>
<evidence type="ECO:0000255" key="3"/>
<evidence type="ECO:0000255" key="4">
    <source>
        <dbReference type="PROSITE-ProRule" id="PRU00498"/>
    </source>
</evidence>
<evidence type="ECO:0000255" key="5">
    <source>
        <dbReference type="PROSITE-ProRule" id="PRU01355"/>
    </source>
</evidence>
<evidence type="ECO:0000303" key="6">
    <source>
    </source>
</evidence>
<evidence type="ECO:0000305" key="7"/>
<evidence type="ECO:0000312" key="8">
    <source>
        <dbReference type="EMBL" id="AFP83450.1"/>
    </source>
</evidence>
<name>ACE_CHICK</name>
<keyword id="KW-0121">Carboxypeptidase</keyword>
<keyword id="KW-1003">Cell membrane</keyword>
<keyword id="KW-0963">Cytoplasm</keyword>
<keyword id="KW-1015">Disulfide bond</keyword>
<keyword id="KW-0325">Glycoprotein</keyword>
<keyword id="KW-0378">Hydrolase</keyword>
<keyword id="KW-0472">Membrane</keyword>
<keyword id="KW-0479">Metal-binding</keyword>
<keyword id="KW-0482">Metalloprotease</keyword>
<keyword id="KW-0597">Phosphoprotein</keyword>
<keyword id="KW-0645">Protease</keyword>
<keyword id="KW-1185">Reference proteome</keyword>
<keyword id="KW-0677">Repeat</keyword>
<keyword id="KW-0732">Signal</keyword>
<keyword id="KW-0812">Transmembrane</keyword>
<keyword id="KW-1133">Transmembrane helix</keyword>
<keyword id="KW-0862">Zinc</keyword>